<protein>
    <recommendedName>
        <fullName evidence="1">Enolase</fullName>
        <ecNumber evidence="1">4.2.1.11</ecNumber>
    </recommendedName>
    <alternativeName>
        <fullName evidence="1">2-phospho-D-glycerate hydro-lyase</fullName>
    </alternativeName>
    <alternativeName>
        <fullName evidence="1">2-phosphoglycerate dehydratase</fullName>
    </alternativeName>
</protein>
<name>ENO_AERS4</name>
<sequence>MSKIVKVIGREIIDSRGNPTVEAEVHLEGGFVGMAAAPSGASTGSREALELRDGDKSRFLGKGVLKALEAVNGPIAQALLGKDAKDQAAIDQIMIDLDGTENKSKFGANAILAVSLANAKAAAAAKGMPLYAHIAELNGTAGVYSMPLPMMNIINGGEHADNNVDIQEFMIQPVGAKTLKEAVRMGAEVFHNLAKVLKSKGYNTAVGDEGGFAPNLKSNAEALEVIAEAVAAAGYVLGKDITLAMDCAASEFYDAEKKEYNLKGEGRIFTSNEFSDYLADLTTKFPIVSIEDGLDESDWDGFAYQTKELGKKIQIVGDDLFVTNTKILKRGIDNGIANSILIKFNQIGSLTETLAAIKMAKDAGYTAVISHRSGETEDATIADLAVGTAAGQIKTGSMSRSDRVAKYNQLIRIEEALGAKAPFNGLKEVKGQA</sequence>
<evidence type="ECO:0000255" key="1">
    <source>
        <dbReference type="HAMAP-Rule" id="MF_00318"/>
    </source>
</evidence>
<proteinExistence type="inferred from homology"/>
<keyword id="KW-0963">Cytoplasm</keyword>
<keyword id="KW-0324">Glycolysis</keyword>
<keyword id="KW-0456">Lyase</keyword>
<keyword id="KW-0460">Magnesium</keyword>
<keyword id="KW-0479">Metal-binding</keyword>
<keyword id="KW-0964">Secreted</keyword>
<organism>
    <name type="scientific">Aeromonas salmonicida (strain A449)</name>
    <dbReference type="NCBI Taxonomy" id="382245"/>
    <lineage>
        <taxon>Bacteria</taxon>
        <taxon>Pseudomonadati</taxon>
        <taxon>Pseudomonadota</taxon>
        <taxon>Gammaproteobacteria</taxon>
        <taxon>Aeromonadales</taxon>
        <taxon>Aeromonadaceae</taxon>
        <taxon>Aeromonas</taxon>
    </lineage>
</organism>
<dbReference type="EC" id="4.2.1.11" evidence="1"/>
<dbReference type="EMBL" id="CP000644">
    <property type="protein sequence ID" value="ABO91443.1"/>
    <property type="molecule type" value="Genomic_DNA"/>
</dbReference>
<dbReference type="RefSeq" id="WP_005318874.1">
    <property type="nucleotide sequence ID" value="NC_009348.1"/>
</dbReference>
<dbReference type="SMR" id="A4SRC1"/>
<dbReference type="STRING" id="29491.GCA_000820065_01047"/>
<dbReference type="GeneID" id="79881229"/>
<dbReference type="KEGG" id="asa:ASA_3475"/>
<dbReference type="eggNOG" id="COG0148">
    <property type="taxonomic scope" value="Bacteria"/>
</dbReference>
<dbReference type="HOGENOM" id="CLU_031223_2_1_6"/>
<dbReference type="UniPathway" id="UPA00109">
    <property type="reaction ID" value="UER00187"/>
</dbReference>
<dbReference type="Proteomes" id="UP000000225">
    <property type="component" value="Chromosome"/>
</dbReference>
<dbReference type="GO" id="GO:0009986">
    <property type="term" value="C:cell surface"/>
    <property type="evidence" value="ECO:0007669"/>
    <property type="project" value="UniProtKB-SubCell"/>
</dbReference>
<dbReference type="GO" id="GO:0005576">
    <property type="term" value="C:extracellular region"/>
    <property type="evidence" value="ECO:0007669"/>
    <property type="project" value="UniProtKB-SubCell"/>
</dbReference>
<dbReference type="GO" id="GO:0000015">
    <property type="term" value="C:phosphopyruvate hydratase complex"/>
    <property type="evidence" value="ECO:0007669"/>
    <property type="project" value="InterPro"/>
</dbReference>
<dbReference type="GO" id="GO:0000287">
    <property type="term" value="F:magnesium ion binding"/>
    <property type="evidence" value="ECO:0007669"/>
    <property type="project" value="UniProtKB-UniRule"/>
</dbReference>
<dbReference type="GO" id="GO:0004634">
    <property type="term" value="F:phosphopyruvate hydratase activity"/>
    <property type="evidence" value="ECO:0007669"/>
    <property type="project" value="UniProtKB-UniRule"/>
</dbReference>
<dbReference type="GO" id="GO:0006096">
    <property type="term" value="P:glycolytic process"/>
    <property type="evidence" value="ECO:0007669"/>
    <property type="project" value="UniProtKB-UniRule"/>
</dbReference>
<dbReference type="CDD" id="cd03313">
    <property type="entry name" value="enolase"/>
    <property type="match status" value="1"/>
</dbReference>
<dbReference type="FunFam" id="3.20.20.120:FF:000001">
    <property type="entry name" value="Enolase"/>
    <property type="match status" value="1"/>
</dbReference>
<dbReference type="FunFam" id="3.30.390.10:FF:000001">
    <property type="entry name" value="Enolase"/>
    <property type="match status" value="1"/>
</dbReference>
<dbReference type="Gene3D" id="3.20.20.120">
    <property type="entry name" value="Enolase-like C-terminal domain"/>
    <property type="match status" value="1"/>
</dbReference>
<dbReference type="Gene3D" id="3.30.390.10">
    <property type="entry name" value="Enolase-like, N-terminal domain"/>
    <property type="match status" value="1"/>
</dbReference>
<dbReference type="HAMAP" id="MF_00318">
    <property type="entry name" value="Enolase"/>
    <property type="match status" value="1"/>
</dbReference>
<dbReference type="InterPro" id="IPR000941">
    <property type="entry name" value="Enolase"/>
</dbReference>
<dbReference type="InterPro" id="IPR036849">
    <property type="entry name" value="Enolase-like_C_sf"/>
</dbReference>
<dbReference type="InterPro" id="IPR029017">
    <property type="entry name" value="Enolase-like_N"/>
</dbReference>
<dbReference type="InterPro" id="IPR020810">
    <property type="entry name" value="Enolase_C"/>
</dbReference>
<dbReference type="InterPro" id="IPR020809">
    <property type="entry name" value="Enolase_CS"/>
</dbReference>
<dbReference type="InterPro" id="IPR020811">
    <property type="entry name" value="Enolase_N"/>
</dbReference>
<dbReference type="NCBIfam" id="TIGR01060">
    <property type="entry name" value="eno"/>
    <property type="match status" value="1"/>
</dbReference>
<dbReference type="PANTHER" id="PTHR11902">
    <property type="entry name" value="ENOLASE"/>
    <property type="match status" value="1"/>
</dbReference>
<dbReference type="PANTHER" id="PTHR11902:SF1">
    <property type="entry name" value="ENOLASE"/>
    <property type="match status" value="1"/>
</dbReference>
<dbReference type="Pfam" id="PF00113">
    <property type="entry name" value="Enolase_C"/>
    <property type="match status" value="1"/>
</dbReference>
<dbReference type="Pfam" id="PF03952">
    <property type="entry name" value="Enolase_N"/>
    <property type="match status" value="1"/>
</dbReference>
<dbReference type="PIRSF" id="PIRSF001400">
    <property type="entry name" value="Enolase"/>
    <property type="match status" value="1"/>
</dbReference>
<dbReference type="PRINTS" id="PR00148">
    <property type="entry name" value="ENOLASE"/>
</dbReference>
<dbReference type="SFLD" id="SFLDF00002">
    <property type="entry name" value="enolase"/>
    <property type="match status" value="1"/>
</dbReference>
<dbReference type="SFLD" id="SFLDG00178">
    <property type="entry name" value="enolase"/>
    <property type="match status" value="1"/>
</dbReference>
<dbReference type="SMART" id="SM01192">
    <property type="entry name" value="Enolase_C"/>
    <property type="match status" value="1"/>
</dbReference>
<dbReference type="SMART" id="SM01193">
    <property type="entry name" value="Enolase_N"/>
    <property type="match status" value="1"/>
</dbReference>
<dbReference type="SUPFAM" id="SSF51604">
    <property type="entry name" value="Enolase C-terminal domain-like"/>
    <property type="match status" value="1"/>
</dbReference>
<dbReference type="SUPFAM" id="SSF54826">
    <property type="entry name" value="Enolase N-terminal domain-like"/>
    <property type="match status" value="1"/>
</dbReference>
<dbReference type="PROSITE" id="PS00164">
    <property type="entry name" value="ENOLASE"/>
    <property type="match status" value="1"/>
</dbReference>
<feature type="chain" id="PRO_1000019182" description="Enolase">
    <location>
        <begin position="1"/>
        <end position="433"/>
    </location>
</feature>
<feature type="active site" description="Proton donor" evidence="1">
    <location>
        <position position="209"/>
    </location>
</feature>
<feature type="active site" description="Proton acceptor" evidence="1">
    <location>
        <position position="343"/>
    </location>
</feature>
<feature type="binding site" evidence="1">
    <location>
        <position position="167"/>
    </location>
    <ligand>
        <name>(2R)-2-phosphoglycerate</name>
        <dbReference type="ChEBI" id="CHEBI:58289"/>
    </ligand>
</feature>
<feature type="binding site" evidence="1">
    <location>
        <position position="246"/>
    </location>
    <ligand>
        <name>Mg(2+)</name>
        <dbReference type="ChEBI" id="CHEBI:18420"/>
    </ligand>
</feature>
<feature type="binding site" evidence="1">
    <location>
        <position position="291"/>
    </location>
    <ligand>
        <name>Mg(2+)</name>
        <dbReference type="ChEBI" id="CHEBI:18420"/>
    </ligand>
</feature>
<feature type="binding site" evidence="1">
    <location>
        <position position="318"/>
    </location>
    <ligand>
        <name>Mg(2+)</name>
        <dbReference type="ChEBI" id="CHEBI:18420"/>
    </ligand>
</feature>
<feature type="binding site" evidence="1">
    <location>
        <position position="343"/>
    </location>
    <ligand>
        <name>(2R)-2-phosphoglycerate</name>
        <dbReference type="ChEBI" id="CHEBI:58289"/>
    </ligand>
</feature>
<feature type="binding site" evidence="1">
    <location>
        <position position="372"/>
    </location>
    <ligand>
        <name>(2R)-2-phosphoglycerate</name>
        <dbReference type="ChEBI" id="CHEBI:58289"/>
    </ligand>
</feature>
<feature type="binding site" evidence="1">
    <location>
        <position position="373"/>
    </location>
    <ligand>
        <name>(2R)-2-phosphoglycerate</name>
        <dbReference type="ChEBI" id="CHEBI:58289"/>
    </ligand>
</feature>
<feature type="binding site" evidence="1">
    <location>
        <position position="394"/>
    </location>
    <ligand>
        <name>(2R)-2-phosphoglycerate</name>
        <dbReference type="ChEBI" id="CHEBI:58289"/>
    </ligand>
</feature>
<accession>A4SRC1</accession>
<reference key="1">
    <citation type="journal article" date="2008" name="BMC Genomics">
        <title>The genome of Aeromonas salmonicida subsp. salmonicida A449: insights into the evolution of a fish pathogen.</title>
        <authorList>
            <person name="Reith M.E."/>
            <person name="Singh R.K."/>
            <person name="Curtis B."/>
            <person name="Boyd J.M."/>
            <person name="Bouevitch A."/>
            <person name="Kimball J."/>
            <person name="Munholland J."/>
            <person name="Murphy C."/>
            <person name="Sarty D."/>
            <person name="Williams J."/>
            <person name="Nash J.H."/>
            <person name="Johnson S.C."/>
            <person name="Brown L.L."/>
        </authorList>
    </citation>
    <scope>NUCLEOTIDE SEQUENCE [LARGE SCALE GENOMIC DNA]</scope>
    <source>
        <strain>A449</strain>
    </source>
</reference>
<gene>
    <name evidence="1" type="primary">eno</name>
    <name type="ordered locus">ASA_3475</name>
</gene>
<comment type="function">
    <text evidence="1">Catalyzes the reversible conversion of 2-phosphoglycerate (2-PG) into phosphoenolpyruvate (PEP). It is essential for the degradation of carbohydrates via glycolysis.</text>
</comment>
<comment type="catalytic activity">
    <reaction evidence="1">
        <text>(2R)-2-phosphoglycerate = phosphoenolpyruvate + H2O</text>
        <dbReference type="Rhea" id="RHEA:10164"/>
        <dbReference type="ChEBI" id="CHEBI:15377"/>
        <dbReference type="ChEBI" id="CHEBI:58289"/>
        <dbReference type="ChEBI" id="CHEBI:58702"/>
        <dbReference type="EC" id="4.2.1.11"/>
    </reaction>
</comment>
<comment type="cofactor">
    <cofactor evidence="1">
        <name>Mg(2+)</name>
        <dbReference type="ChEBI" id="CHEBI:18420"/>
    </cofactor>
    <text evidence="1">Binds a second Mg(2+) ion via substrate during catalysis.</text>
</comment>
<comment type="pathway">
    <text evidence="1">Carbohydrate degradation; glycolysis; pyruvate from D-glyceraldehyde 3-phosphate: step 4/5.</text>
</comment>
<comment type="subunit">
    <text evidence="1">Component of the RNA degradosome, a multiprotein complex involved in RNA processing and mRNA degradation.</text>
</comment>
<comment type="subcellular location">
    <subcellularLocation>
        <location evidence="1">Cytoplasm</location>
    </subcellularLocation>
    <subcellularLocation>
        <location evidence="1">Secreted</location>
    </subcellularLocation>
    <subcellularLocation>
        <location evidence="1">Cell surface</location>
    </subcellularLocation>
    <text evidence="1">Fractions of enolase are present in both the cytoplasm and on the cell surface.</text>
</comment>
<comment type="similarity">
    <text evidence="1">Belongs to the enolase family.</text>
</comment>